<protein>
    <recommendedName>
        <fullName evidence="1">CTP synthase</fullName>
        <ecNumber evidence="1">6.3.4.2</ecNumber>
    </recommendedName>
    <alternativeName>
        <fullName evidence="1">Cytidine 5'-triphosphate synthase</fullName>
    </alternativeName>
    <alternativeName>
        <fullName evidence="1">Cytidine triphosphate synthetase</fullName>
        <shortName evidence="1">CTP synthetase</shortName>
        <shortName evidence="1">CTPS</shortName>
    </alternativeName>
    <alternativeName>
        <fullName evidence="1">UTP--ammonia ligase</fullName>
    </alternativeName>
</protein>
<accession>Q31XL0</accession>
<keyword id="KW-0067">ATP-binding</keyword>
<keyword id="KW-0315">Glutamine amidotransferase</keyword>
<keyword id="KW-0436">Ligase</keyword>
<keyword id="KW-0460">Magnesium</keyword>
<keyword id="KW-0479">Metal-binding</keyword>
<keyword id="KW-0547">Nucleotide-binding</keyword>
<keyword id="KW-0665">Pyrimidine biosynthesis</keyword>
<dbReference type="EC" id="6.3.4.2" evidence="1"/>
<dbReference type="EMBL" id="CP000036">
    <property type="protein sequence ID" value="ABB67198.1"/>
    <property type="molecule type" value="Genomic_DNA"/>
</dbReference>
<dbReference type="RefSeq" id="WP_000210878.1">
    <property type="nucleotide sequence ID" value="NC_007613.1"/>
</dbReference>
<dbReference type="SMR" id="Q31XL0"/>
<dbReference type="MEROPS" id="C26.964"/>
<dbReference type="GeneID" id="93779218"/>
<dbReference type="KEGG" id="sbo:SBO_2661"/>
<dbReference type="HOGENOM" id="CLU_011675_5_0_6"/>
<dbReference type="UniPathway" id="UPA00159">
    <property type="reaction ID" value="UER00277"/>
</dbReference>
<dbReference type="Proteomes" id="UP000007067">
    <property type="component" value="Chromosome"/>
</dbReference>
<dbReference type="GO" id="GO:0005829">
    <property type="term" value="C:cytosol"/>
    <property type="evidence" value="ECO:0007669"/>
    <property type="project" value="TreeGrafter"/>
</dbReference>
<dbReference type="GO" id="GO:0005524">
    <property type="term" value="F:ATP binding"/>
    <property type="evidence" value="ECO:0007669"/>
    <property type="project" value="UniProtKB-KW"/>
</dbReference>
<dbReference type="GO" id="GO:0003883">
    <property type="term" value="F:CTP synthase activity"/>
    <property type="evidence" value="ECO:0007669"/>
    <property type="project" value="UniProtKB-UniRule"/>
</dbReference>
<dbReference type="GO" id="GO:0004359">
    <property type="term" value="F:glutaminase activity"/>
    <property type="evidence" value="ECO:0007669"/>
    <property type="project" value="RHEA"/>
</dbReference>
<dbReference type="GO" id="GO:0042802">
    <property type="term" value="F:identical protein binding"/>
    <property type="evidence" value="ECO:0007669"/>
    <property type="project" value="TreeGrafter"/>
</dbReference>
<dbReference type="GO" id="GO:0046872">
    <property type="term" value="F:metal ion binding"/>
    <property type="evidence" value="ECO:0007669"/>
    <property type="project" value="UniProtKB-KW"/>
</dbReference>
<dbReference type="GO" id="GO:0044210">
    <property type="term" value="P:'de novo' CTP biosynthetic process"/>
    <property type="evidence" value="ECO:0007669"/>
    <property type="project" value="UniProtKB-UniRule"/>
</dbReference>
<dbReference type="GO" id="GO:0019856">
    <property type="term" value="P:pyrimidine nucleobase biosynthetic process"/>
    <property type="evidence" value="ECO:0007669"/>
    <property type="project" value="TreeGrafter"/>
</dbReference>
<dbReference type="CDD" id="cd03113">
    <property type="entry name" value="CTPS_N"/>
    <property type="match status" value="1"/>
</dbReference>
<dbReference type="CDD" id="cd01746">
    <property type="entry name" value="GATase1_CTP_Synthase"/>
    <property type="match status" value="1"/>
</dbReference>
<dbReference type="FunFam" id="3.40.50.300:FF:000009">
    <property type="entry name" value="CTP synthase"/>
    <property type="match status" value="1"/>
</dbReference>
<dbReference type="FunFam" id="3.40.50.880:FF:000002">
    <property type="entry name" value="CTP synthase"/>
    <property type="match status" value="1"/>
</dbReference>
<dbReference type="Gene3D" id="3.40.50.880">
    <property type="match status" value="1"/>
</dbReference>
<dbReference type="Gene3D" id="3.40.50.300">
    <property type="entry name" value="P-loop containing nucleotide triphosphate hydrolases"/>
    <property type="match status" value="1"/>
</dbReference>
<dbReference type="HAMAP" id="MF_01227">
    <property type="entry name" value="PyrG"/>
    <property type="match status" value="1"/>
</dbReference>
<dbReference type="InterPro" id="IPR029062">
    <property type="entry name" value="Class_I_gatase-like"/>
</dbReference>
<dbReference type="InterPro" id="IPR004468">
    <property type="entry name" value="CTP_synthase"/>
</dbReference>
<dbReference type="InterPro" id="IPR017456">
    <property type="entry name" value="CTP_synthase_N"/>
</dbReference>
<dbReference type="InterPro" id="IPR017926">
    <property type="entry name" value="GATASE"/>
</dbReference>
<dbReference type="InterPro" id="IPR033828">
    <property type="entry name" value="GATase1_CTP_Synthase"/>
</dbReference>
<dbReference type="InterPro" id="IPR027417">
    <property type="entry name" value="P-loop_NTPase"/>
</dbReference>
<dbReference type="NCBIfam" id="NF003792">
    <property type="entry name" value="PRK05380.1"/>
    <property type="match status" value="1"/>
</dbReference>
<dbReference type="NCBIfam" id="TIGR00337">
    <property type="entry name" value="PyrG"/>
    <property type="match status" value="1"/>
</dbReference>
<dbReference type="PANTHER" id="PTHR11550">
    <property type="entry name" value="CTP SYNTHASE"/>
    <property type="match status" value="1"/>
</dbReference>
<dbReference type="PANTHER" id="PTHR11550:SF0">
    <property type="entry name" value="CTP SYNTHASE-RELATED"/>
    <property type="match status" value="1"/>
</dbReference>
<dbReference type="Pfam" id="PF06418">
    <property type="entry name" value="CTP_synth_N"/>
    <property type="match status" value="1"/>
</dbReference>
<dbReference type="Pfam" id="PF00117">
    <property type="entry name" value="GATase"/>
    <property type="match status" value="1"/>
</dbReference>
<dbReference type="SUPFAM" id="SSF52317">
    <property type="entry name" value="Class I glutamine amidotransferase-like"/>
    <property type="match status" value="1"/>
</dbReference>
<dbReference type="SUPFAM" id="SSF52540">
    <property type="entry name" value="P-loop containing nucleoside triphosphate hydrolases"/>
    <property type="match status" value="1"/>
</dbReference>
<dbReference type="PROSITE" id="PS51273">
    <property type="entry name" value="GATASE_TYPE_1"/>
    <property type="match status" value="1"/>
</dbReference>
<evidence type="ECO:0000255" key="1">
    <source>
        <dbReference type="HAMAP-Rule" id="MF_01227"/>
    </source>
</evidence>
<proteinExistence type="inferred from homology"/>
<sequence length="545" mass="60374">MTTNYIFVTGGVVSSLGKGIAAASLAAILEARGLNVTIMKLDPYINVDPGTMSPIQHGEVFVTEDGAETDLDLGHYERFIRTKMSRRNNFTTGRIYSDVLRKERRGDYLGATVQVIPHITNAIKERVLEGGEGHDVVLVEIGGTVGDIESLPFLEAIRQMAVEIGREHTLFMHLTLVPYMAASGEVKTKPTQHSVKELLSIGIQPDILICRSDRAVPANERAKIALFCNVPEKAVISLKDVDSIYKIPGLLKSQGLDDYICKRFSLNCPEANLSEWEQVIFEEANPVSEVTIGMVGKYIELPDAYKSVIEALKHGGLKNRVSVNIKLIDSQDVETRGVEILKGLDAILVPGGFGYRGVEGMITTARFARENNIPYLGICLGMQVALIDYARHVANMENANSTEFVPDCKYPVVALITEWRDENGNVEVRSEKSDLGGTMRLGAQQCQLVDDSLVRQLYNAPTIVERHRHRYEVNNMLLKQIEDAGLRVAGRSGDDQLVEIIEVPNHPWFVACQFHPEFTSTPRDGHPLFAGFVKAASEFQKRQAK</sequence>
<reference key="1">
    <citation type="journal article" date="2005" name="Nucleic Acids Res.">
        <title>Genome dynamics and diversity of Shigella species, the etiologic agents of bacillary dysentery.</title>
        <authorList>
            <person name="Yang F."/>
            <person name="Yang J."/>
            <person name="Zhang X."/>
            <person name="Chen L."/>
            <person name="Jiang Y."/>
            <person name="Yan Y."/>
            <person name="Tang X."/>
            <person name="Wang J."/>
            <person name="Xiong Z."/>
            <person name="Dong J."/>
            <person name="Xue Y."/>
            <person name="Zhu Y."/>
            <person name="Xu X."/>
            <person name="Sun L."/>
            <person name="Chen S."/>
            <person name="Nie H."/>
            <person name="Peng J."/>
            <person name="Xu J."/>
            <person name="Wang Y."/>
            <person name="Yuan Z."/>
            <person name="Wen Y."/>
            <person name="Yao Z."/>
            <person name="Shen Y."/>
            <person name="Qiang B."/>
            <person name="Hou Y."/>
            <person name="Yu J."/>
            <person name="Jin Q."/>
        </authorList>
    </citation>
    <scope>NUCLEOTIDE SEQUENCE [LARGE SCALE GENOMIC DNA]</scope>
    <source>
        <strain>Sb227</strain>
    </source>
</reference>
<gene>
    <name evidence="1" type="primary">pyrG</name>
    <name type="ordered locus">SBO_2661</name>
</gene>
<name>PYRG_SHIBS</name>
<feature type="chain" id="PRO_0000266217" description="CTP synthase">
    <location>
        <begin position="1"/>
        <end position="545"/>
    </location>
</feature>
<feature type="domain" description="Glutamine amidotransferase type-1" evidence="1">
    <location>
        <begin position="291"/>
        <end position="542"/>
    </location>
</feature>
<feature type="region of interest" description="Amidoligase domain" evidence="1">
    <location>
        <begin position="1"/>
        <end position="266"/>
    </location>
</feature>
<feature type="active site" description="Nucleophile; for glutamine hydrolysis" evidence="1">
    <location>
        <position position="379"/>
    </location>
</feature>
<feature type="active site" evidence="1">
    <location>
        <position position="515"/>
    </location>
</feature>
<feature type="active site" evidence="1">
    <location>
        <position position="517"/>
    </location>
</feature>
<feature type="binding site" evidence="1">
    <location>
        <position position="14"/>
    </location>
    <ligand>
        <name>CTP</name>
        <dbReference type="ChEBI" id="CHEBI:37563"/>
        <note>allosteric inhibitor</note>
    </ligand>
</feature>
<feature type="binding site" evidence="1">
    <location>
        <position position="14"/>
    </location>
    <ligand>
        <name>UTP</name>
        <dbReference type="ChEBI" id="CHEBI:46398"/>
    </ligand>
</feature>
<feature type="binding site" evidence="1">
    <location>
        <begin position="15"/>
        <end position="20"/>
    </location>
    <ligand>
        <name>ATP</name>
        <dbReference type="ChEBI" id="CHEBI:30616"/>
    </ligand>
</feature>
<feature type="binding site" evidence="1">
    <location>
        <position position="72"/>
    </location>
    <ligand>
        <name>ATP</name>
        <dbReference type="ChEBI" id="CHEBI:30616"/>
    </ligand>
</feature>
<feature type="binding site" evidence="1">
    <location>
        <position position="72"/>
    </location>
    <ligand>
        <name>Mg(2+)</name>
        <dbReference type="ChEBI" id="CHEBI:18420"/>
    </ligand>
</feature>
<feature type="binding site" evidence="1">
    <location>
        <position position="140"/>
    </location>
    <ligand>
        <name>Mg(2+)</name>
        <dbReference type="ChEBI" id="CHEBI:18420"/>
    </ligand>
</feature>
<feature type="binding site" evidence="1">
    <location>
        <begin position="147"/>
        <end position="149"/>
    </location>
    <ligand>
        <name>CTP</name>
        <dbReference type="ChEBI" id="CHEBI:37563"/>
        <note>allosteric inhibitor</note>
    </ligand>
</feature>
<feature type="binding site" evidence="1">
    <location>
        <begin position="187"/>
        <end position="192"/>
    </location>
    <ligand>
        <name>CTP</name>
        <dbReference type="ChEBI" id="CHEBI:37563"/>
        <note>allosteric inhibitor</note>
    </ligand>
</feature>
<feature type="binding site" evidence="1">
    <location>
        <begin position="187"/>
        <end position="192"/>
    </location>
    <ligand>
        <name>UTP</name>
        <dbReference type="ChEBI" id="CHEBI:46398"/>
    </ligand>
</feature>
<feature type="binding site" evidence="1">
    <location>
        <position position="223"/>
    </location>
    <ligand>
        <name>CTP</name>
        <dbReference type="ChEBI" id="CHEBI:37563"/>
        <note>allosteric inhibitor</note>
    </ligand>
</feature>
<feature type="binding site" evidence="1">
    <location>
        <position position="223"/>
    </location>
    <ligand>
        <name>UTP</name>
        <dbReference type="ChEBI" id="CHEBI:46398"/>
    </ligand>
</feature>
<feature type="binding site" evidence="1">
    <location>
        <begin position="239"/>
        <end position="241"/>
    </location>
    <ligand>
        <name>ATP</name>
        <dbReference type="ChEBI" id="CHEBI:30616"/>
    </ligand>
</feature>
<feature type="binding site" evidence="1">
    <location>
        <position position="352"/>
    </location>
    <ligand>
        <name>L-glutamine</name>
        <dbReference type="ChEBI" id="CHEBI:58359"/>
    </ligand>
</feature>
<feature type="binding site" evidence="1">
    <location>
        <begin position="380"/>
        <end position="383"/>
    </location>
    <ligand>
        <name>L-glutamine</name>
        <dbReference type="ChEBI" id="CHEBI:58359"/>
    </ligand>
</feature>
<feature type="binding site" evidence="1">
    <location>
        <position position="403"/>
    </location>
    <ligand>
        <name>L-glutamine</name>
        <dbReference type="ChEBI" id="CHEBI:58359"/>
    </ligand>
</feature>
<feature type="binding site" evidence="1">
    <location>
        <position position="470"/>
    </location>
    <ligand>
        <name>L-glutamine</name>
        <dbReference type="ChEBI" id="CHEBI:58359"/>
    </ligand>
</feature>
<organism>
    <name type="scientific">Shigella boydii serotype 4 (strain Sb227)</name>
    <dbReference type="NCBI Taxonomy" id="300268"/>
    <lineage>
        <taxon>Bacteria</taxon>
        <taxon>Pseudomonadati</taxon>
        <taxon>Pseudomonadota</taxon>
        <taxon>Gammaproteobacteria</taxon>
        <taxon>Enterobacterales</taxon>
        <taxon>Enterobacteriaceae</taxon>
        <taxon>Shigella</taxon>
    </lineage>
</organism>
<comment type="function">
    <text evidence="1">Catalyzes the ATP-dependent amination of UTP to CTP with either L-glutamine or ammonia as the source of nitrogen. Regulates intracellular CTP levels through interactions with the four ribonucleotide triphosphates.</text>
</comment>
<comment type="catalytic activity">
    <reaction evidence="1">
        <text>UTP + L-glutamine + ATP + H2O = CTP + L-glutamate + ADP + phosphate + 2 H(+)</text>
        <dbReference type="Rhea" id="RHEA:26426"/>
        <dbReference type="ChEBI" id="CHEBI:15377"/>
        <dbReference type="ChEBI" id="CHEBI:15378"/>
        <dbReference type="ChEBI" id="CHEBI:29985"/>
        <dbReference type="ChEBI" id="CHEBI:30616"/>
        <dbReference type="ChEBI" id="CHEBI:37563"/>
        <dbReference type="ChEBI" id="CHEBI:43474"/>
        <dbReference type="ChEBI" id="CHEBI:46398"/>
        <dbReference type="ChEBI" id="CHEBI:58359"/>
        <dbReference type="ChEBI" id="CHEBI:456216"/>
        <dbReference type="EC" id="6.3.4.2"/>
    </reaction>
</comment>
<comment type="catalytic activity">
    <reaction evidence="1">
        <text>L-glutamine + H2O = L-glutamate + NH4(+)</text>
        <dbReference type="Rhea" id="RHEA:15889"/>
        <dbReference type="ChEBI" id="CHEBI:15377"/>
        <dbReference type="ChEBI" id="CHEBI:28938"/>
        <dbReference type="ChEBI" id="CHEBI:29985"/>
        <dbReference type="ChEBI" id="CHEBI:58359"/>
    </reaction>
</comment>
<comment type="catalytic activity">
    <reaction evidence="1">
        <text>UTP + NH4(+) + ATP = CTP + ADP + phosphate + 2 H(+)</text>
        <dbReference type="Rhea" id="RHEA:16597"/>
        <dbReference type="ChEBI" id="CHEBI:15378"/>
        <dbReference type="ChEBI" id="CHEBI:28938"/>
        <dbReference type="ChEBI" id="CHEBI:30616"/>
        <dbReference type="ChEBI" id="CHEBI:37563"/>
        <dbReference type="ChEBI" id="CHEBI:43474"/>
        <dbReference type="ChEBI" id="CHEBI:46398"/>
        <dbReference type="ChEBI" id="CHEBI:456216"/>
    </reaction>
</comment>
<comment type="activity regulation">
    <text evidence="1">Allosterically activated by GTP, when glutamine is the substrate; GTP has no effect on the reaction when ammonia is the substrate. The allosteric effector GTP functions by stabilizing the protein conformation that binds the tetrahedral intermediate(s) formed during glutamine hydrolysis. Inhibited by the product CTP, via allosteric rather than competitive inhibition.</text>
</comment>
<comment type="pathway">
    <text evidence="1">Pyrimidine metabolism; CTP biosynthesis via de novo pathway; CTP from UDP: step 2/2.</text>
</comment>
<comment type="subunit">
    <text evidence="1">Homotetramer.</text>
</comment>
<comment type="miscellaneous">
    <text evidence="1">CTPSs have evolved a hybrid strategy for distinguishing between UTP and CTP. The overlapping regions of the product feedback inhibitory and substrate sites recognize a common feature in both compounds, the triphosphate moiety. To differentiate isosteric substrate and product pyrimidine rings, an additional pocket far from the expected kinase/ligase catalytic site, specifically recognizes the cytosine and ribose portions of the product inhibitor.</text>
</comment>
<comment type="similarity">
    <text evidence="1">Belongs to the CTP synthase family.</text>
</comment>